<organism>
    <name type="scientific">Shigella sonnei (strain Ss046)</name>
    <dbReference type="NCBI Taxonomy" id="300269"/>
    <lineage>
        <taxon>Bacteria</taxon>
        <taxon>Pseudomonadati</taxon>
        <taxon>Pseudomonadota</taxon>
        <taxon>Gammaproteobacteria</taxon>
        <taxon>Enterobacterales</taxon>
        <taxon>Enterobacteriaceae</taxon>
        <taxon>Shigella</taxon>
    </lineage>
</organism>
<feature type="chain" id="PRO_0000313556" description="DNA ligase B">
    <location>
        <begin position="1"/>
        <end position="560"/>
    </location>
</feature>
<feature type="active site" description="N6-AMP-lysine intermediate" evidence="1">
    <location>
        <position position="124"/>
    </location>
</feature>
<name>LIGB_SHISS</name>
<proteinExistence type="inferred from homology"/>
<evidence type="ECO:0000255" key="1">
    <source>
        <dbReference type="HAMAP-Rule" id="MF_01587"/>
    </source>
</evidence>
<evidence type="ECO:0000305" key="2"/>
<comment type="function">
    <text evidence="1">Catalyzes the formation of phosphodiester linkages between 5'-phosphoryl and 3'-hydroxyl groups in double-stranded DNA using NAD as a coenzyme and as the energy source for the reaction.</text>
</comment>
<comment type="catalytic activity">
    <reaction evidence="1">
        <text>NAD(+) + (deoxyribonucleotide)n-3'-hydroxyl + 5'-phospho-(deoxyribonucleotide)m = (deoxyribonucleotide)n+m + AMP + beta-nicotinamide D-nucleotide.</text>
        <dbReference type="EC" id="6.5.1.2"/>
    </reaction>
</comment>
<comment type="similarity">
    <text evidence="1">Belongs to the NAD-dependent DNA ligase family. LigB subfamily.</text>
</comment>
<comment type="sequence caution" evidence="2">
    <conflict type="erroneous initiation">
        <sequence resource="EMBL-CDS" id="AAZ90303"/>
    </conflict>
</comment>
<sequence>MKVWMAILISILCWQSSVWAVCPAWSPARAQEEISRLQQQIKQWDDDYWKEGKSEVEDGVYDQLSARLTQWQRCFGSEPRDVMMPPLNGAVMHPVAHTGVRKMVDKNALSLWMRERSDLWVQPKVDGVAVTLVYRDGKLNKAISRGNGLKGEDWTQKVSLISAVPQTVSGPLANSTLQGEIFLQREGHIQQQMGGINARAKVAGLMMRQGNSDTLNSLAVFVWAWPDGPQLMTDRLKELATAGFTLTQRYTRAVKNADEIARVRNEWWKAKLPFVTDGVVVRAAKEPESRHWLPGQAEWLVAWKYQPVAQVAEVKAIQFAVGKSGKISVVASLAPVMLDDKKVQRVNIGSVRRWQEWDIAPGDQILVSLAGQGIPRIDDVVWRGAERTKPTPPENRFNSLTCYFASDVCQEQFISRLVWLGSKQVLGLDGIGEAGWRALHQTHRFEHIFSWLLLTPEQLQNTPGIAKSKSAQLWHQFNLARKQPFTRWVMAMGIPLTRAALNASDERSWSQLLFSTEQFWQRLPGTGSGRARQVIEWKENAQIKKLGSWLAAQQITGFEP</sequence>
<keyword id="KW-0227">DNA damage</keyword>
<keyword id="KW-0234">DNA repair</keyword>
<keyword id="KW-0235">DNA replication</keyword>
<keyword id="KW-0436">Ligase</keyword>
<keyword id="KW-0520">NAD</keyword>
<keyword id="KW-1185">Reference proteome</keyword>
<gene>
    <name evidence="1" type="primary">ligB</name>
    <name type="ordered locus">SSON_3759</name>
</gene>
<protein>
    <recommendedName>
        <fullName evidence="1">DNA ligase B</fullName>
        <ecNumber evidence="1">6.5.1.2</ecNumber>
    </recommendedName>
    <alternativeName>
        <fullName evidence="1">Polydeoxyribonucleotide synthase [NAD(+)] B</fullName>
    </alternativeName>
</protein>
<reference key="1">
    <citation type="journal article" date="2005" name="Nucleic Acids Res.">
        <title>Genome dynamics and diversity of Shigella species, the etiologic agents of bacillary dysentery.</title>
        <authorList>
            <person name="Yang F."/>
            <person name="Yang J."/>
            <person name="Zhang X."/>
            <person name="Chen L."/>
            <person name="Jiang Y."/>
            <person name="Yan Y."/>
            <person name="Tang X."/>
            <person name="Wang J."/>
            <person name="Xiong Z."/>
            <person name="Dong J."/>
            <person name="Xue Y."/>
            <person name="Zhu Y."/>
            <person name="Xu X."/>
            <person name="Sun L."/>
            <person name="Chen S."/>
            <person name="Nie H."/>
            <person name="Peng J."/>
            <person name="Xu J."/>
            <person name="Wang Y."/>
            <person name="Yuan Z."/>
            <person name="Wen Y."/>
            <person name="Yao Z."/>
            <person name="Shen Y."/>
            <person name="Qiang B."/>
            <person name="Hou Y."/>
            <person name="Yu J."/>
            <person name="Jin Q."/>
        </authorList>
    </citation>
    <scope>NUCLEOTIDE SEQUENCE [LARGE SCALE GENOMIC DNA]</scope>
    <source>
        <strain>Ss046</strain>
    </source>
</reference>
<accession>Q3YW09</accession>
<dbReference type="EC" id="6.5.1.2" evidence="1"/>
<dbReference type="EMBL" id="CP000038">
    <property type="protein sequence ID" value="AAZ90303.1"/>
    <property type="status" value="ALT_INIT"/>
    <property type="molecule type" value="Genomic_DNA"/>
</dbReference>
<dbReference type="RefSeq" id="WP_000870054.1">
    <property type="nucleotide sequence ID" value="NC_007384.1"/>
</dbReference>
<dbReference type="SMR" id="Q3YW09"/>
<dbReference type="KEGG" id="ssn:SSON_3759"/>
<dbReference type="HOGENOM" id="CLU_489786_0_0_6"/>
<dbReference type="Proteomes" id="UP000002529">
    <property type="component" value="Chromosome"/>
</dbReference>
<dbReference type="GO" id="GO:0003911">
    <property type="term" value="F:DNA ligase (NAD+) activity"/>
    <property type="evidence" value="ECO:0007669"/>
    <property type="project" value="UniProtKB-UniRule"/>
</dbReference>
<dbReference type="GO" id="GO:0006281">
    <property type="term" value="P:DNA repair"/>
    <property type="evidence" value="ECO:0007669"/>
    <property type="project" value="UniProtKB-KW"/>
</dbReference>
<dbReference type="GO" id="GO:0006260">
    <property type="term" value="P:DNA replication"/>
    <property type="evidence" value="ECO:0007669"/>
    <property type="project" value="UniProtKB-KW"/>
</dbReference>
<dbReference type="FunFam" id="1.10.287.610:FF:000003">
    <property type="entry name" value="DNA ligase B"/>
    <property type="match status" value="1"/>
</dbReference>
<dbReference type="FunFam" id="2.40.50.140:FF:000139">
    <property type="entry name" value="DNA ligase B"/>
    <property type="match status" value="1"/>
</dbReference>
<dbReference type="FunFam" id="3.30.470.30:FF:000007">
    <property type="entry name" value="DNA ligase B"/>
    <property type="match status" value="1"/>
</dbReference>
<dbReference type="Gene3D" id="3.30.470.30">
    <property type="entry name" value="DNA ligase/mRNA capping enzyme"/>
    <property type="match status" value="1"/>
</dbReference>
<dbReference type="Gene3D" id="1.10.287.610">
    <property type="entry name" value="Helix hairpin bin"/>
    <property type="match status" value="1"/>
</dbReference>
<dbReference type="Gene3D" id="2.40.50.140">
    <property type="entry name" value="Nucleic acid-binding proteins"/>
    <property type="match status" value="1"/>
</dbReference>
<dbReference type="HAMAP" id="MF_01587">
    <property type="entry name" value="DNA_ligase_B"/>
    <property type="match status" value="1"/>
</dbReference>
<dbReference type="InterPro" id="IPR018239">
    <property type="entry name" value="DNA_ligase_AS"/>
</dbReference>
<dbReference type="InterPro" id="IPR020923">
    <property type="entry name" value="DNA_ligase_B"/>
</dbReference>
<dbReference type="InterPro" id="IPR033136">
    <property type="entry name" value="DNA_ligase_CS"/>
</dbReference>
<dbReference type="InterPro" id="IPR013839">
    <property type="entry name" value="DNAligase_adenylation"/>
</dbReference>
<dbReference type="InterPro" id="IPR013840">
    <property type="entry name" value="DNAligase_N"/>
</dbReference>
<dbReference type="InterPro" id="IPR012340">
    <property type="entry name" value="NA-bd_OB-fold"/>
</dbReference>
<dbReference type="InterPro" id="IPR050326">
    <property type="entry name" value="NAD_dep_DNA_ligaseB"/>
</dbReference>
<dbReference type="InterPro" id="IPR004150">
    <property type="entry name" value="NAD_DNA_ligase_OB"/>
</dbReference>
<dbReference type="InterPro" id="IPR010994">
    <property type="entry name" value="RuvA_2-like"/>
</dbReference>
<dbReference type="NCBIfam" id="NF005987">
    <property type="entry name" value="PRK08097.1"/>
    <property type="match status" value="1"/>
</dbReference>
<dbReference type="PANTHER" id="PTHR47810">
    <property type="entry name" value="DNA LIGASE"/>
    <property type="match status" value="1"/>
</dbReference>
<dbReference type="PANTHER" id="PTHR47810:SF1">
    <property type="entry name" value="DNA LIGASE B"/>
    <property type="match status" value="1"/>
</dbReference>
<dbReference type="Pfam" id="PF01653">
    <property type="entry name" value="DNA_ligase_aden"/>
    <property type="match status" value="1"/>
</dbReference>
<dbReference type="Pfam" id="PF03120">
    <property type="entry name" value="DNA_ligase_OB"/>
    <property type="match status" value="1"/>
</dbReference>
<dbReference type="SMART" id="SM00532">
    <property type="entry name" value="LIGANc"/>
    <property type="match status" value="1"/>
</dbReference>
<dbReference type="SUPFAM" id="SSF56091">
    <property type="entry name" value="DNA ligase/mRNA capping enzyme, catalytic domain"/>
    <property type="match status" value="1"/>
</dbReference>
<dbReference type="SUPFAM" id="SSF50249">
    <property type="entry name" value="Nucleic acid-binding proteins"/>
    <property type="match status" value="1"/>
</dbReference>
<dbReference type="SUPFAM" id="SSF47781">
    <property type="entry name" value="RuvA domain 2-like"/>
    <property type="match status" value="1"/>
</dbReference>
<dbReference type="PROSITE" id="PS01055">
    <property type="entry name" value="DNA_LIGASE_N1"/>
    <property type="match status" value="1"/>
</dbReference>
<dbReference type="PROSITE" id="PS01056">
    <property type="entry name" value="DNA_LIGASE_N2"/>
    <property type="match status" value="1"/>
</dbReference>